<keyword id="KW-0227">DNA damage</keyword>
<keyword id="KW-0234">DNA repair</keyword>
<sequence length="660" mass="74403">MTNIIELPEVLANQIAAGEVVERPASVVKELVENAIDAKSSQITVEIEESGLKMIQVTDNGEGMSHEDLPLSLRRHATSKIKSQSDLFRIRTLGFRGEALPSVASISKITIKTATKEVTHGSLLIATGGEIETLEAISTPTGTKIKVENLFYNTPARLKYMKSLQAELAHIVDVVNRLSLAHPEVAFTLISDGRQLTQTSGTGDLRQAIAGIYGLNTTKKMLAISNADLDFEVSGYVSLPELTRANRNYMTILVNGRYIKNFLLNRAILDGYGSKLMVGRFPIVVIDIQIDPYLADVNVHPTKQEVRISKERELMALISTAISESLKEQDLIPDALENLAKSSTRHFSKPEQTQLPLQSRGLYYDPQKNDFFVKESAVSEKIPETDFYFGAVDNSVKVEKAELLPHSEEVIGPSSVKHASRPQNTFTETDHPNLDLKNRQKLSQMLNRLENEEKSVFPELDYFGQMHGTYLFAQGKDGLFIIDQHAAQERVKYEYYRDKIGEVDSSLQQLLVPYLFEFSGSDFINLQEKMALLNEVGIFLEVYGHNTFILREHPIWMKEEEIASGVYEMCDMLLLTNEVSIKTYRAELAIMMSCKRSIKANHSLDDYSARNLLLQLAQCQNPYNCPHGRPVLINFSKADMEKMFRRIQENHTSLRELGKY</sequence>
<feature type="chain" id="PRO_0000177981" description="DNA mismatch repair protein MutL">
    <location>
        <begin position="1"/>
        <end position="660"/>
    </location>
</feature>
<feature type="region of interest" description="Disordered" evidence="2">
    <location>
        <begin position="414"/>
        <end position="433"/>
    </location>
</feature>
<organism>
    <name type="scientific">Streptococcus pyogenes serotype M6 (strain ATCC BAA-946 / MGAS10394)</name>
    <dbReference type="NCBI Taxonomy" id="286636"/>
    <lineage>
        <taxon>Bacteria</taxon>
        <taxon>Bacillati</taxon>
        <taxon>Bacillota</taxon>
        <taxon>Bacilli</taxon>
        <taxon>Lactobacillales</taxon>
        <taxon>Streptococcaceae</taxon>
        <taxon>Streptococcus</taxon>
    </lineage>
</organism>
<reference key="1">
    <citation type="journal article" date="2004" name="J. Infect. Dis.">
        <title>Progress toward characterization of the group A Streptococcus metagenome: complete genome sequence of a macrolide-resistant serotype M6 strain.</title>
        <authorList>
            <person name="Banks D.J."/>
            <person name="Porcella S.F."/>
            <person name="Barbian K.D."/>
            <person name="Beres S.B."/>
            <person name="Philips L.E."/>
            <person name="Voyich J.M."/>
            <person name="DeLeo F.R."/>
            <person name="Martin J.M."/>
            <person name="Somerville G.A."/>
            <person name="Musser J.M."/>
        </authorList>
    </citation>
    <scope>NUCLEOTIDE SEQUENCE [LARGE SCALE GENOMIC DNA]</scope>
    <source>
        <strain>ATCC BAA-946 / MGAS10394</strain>
    </source>
</reference>
<name>MUTL_STRP6</name>
<comment type="function">
    <text evidence="1">This protein is involved in the repair of mismatches in DNA. It is required for dam-dependent methyl-directed DNA mismatch repair. May act as a 'molecular matchmaker', a protein that promotes the formation of a stable complex between two or more DNA-binding proteins in an ATP-dependent manner without itself being part of a final effector complex.</text>
</comment>
<comment type="similarity">
    <text evidence="1">Belongs to the DNA mismatch repair MutL/HexB family.</text>
</comment>
<comment type="sequence caution" evidence="3">
    <conflict type="erroneous initiation">
        <sequence resource="EMBL-CDS" id="AAT87938"/>
    </conflict>
</comment>
<evidence type="ECO:0000255" key="1">
    <source>
        <dbReference type="HAMAP-Rule" id="MF_00149"/>
    </source>
</evidence>
<evidence type="ECO:0000256" key="2">
    <source>
        <dbReference type="SAM" id="MobiDB-lite"/>
    </source>
</evidence>
<evidence type="ECO:0000305" key="3"/>
<dbReference type="EMBL" id="CP000003">
    <property type="protein sequence ID" value="AAT87938.1"/>
    <property type="status" value="ALT_INIT"/>
    <property type="molecule type" value="Genomic_DNA"/>
</dbReference>
<dbReference type="RefSeq" id="WP_027968888.1">
    <property type="nucleotide sequence ID" value="NC_006086.1"/>
</dbReference>
<dbReference type="SMR" id="Q5X9H5"/>
<dbReference type="KEGG" id="spa:M6_Spy1803"/>
<dbReference type="HOGENOM" id="CLU_004131_4_1_9"/>
<dbReference type="Proteomes" id="UP000001167">
    <property type="component" value="Chromosome"/>
</dbReference>
<dbReference type="GO" id="GO:0032300">
    <property type="term" value="C:mismatch repair complex"/>
    <property type="evidence" value="ECO:0007669"/>
    <property type="project" value="InterPro"/>
</dbReference>
<dbReference type="GO" id="GO:0005524">
    <property type="term" value="F:ATP binding"/>
    <property type="evidence" value="ECO:0007669"/>
    <property type="project" value="InterPro"/>
</dbReference>
<dbReference type="GO" id="GO:0016887">
    <property type="term" value="F:ATP hydrolysis activity"/>
    <property type="evidence" value="ECO:0007669"/>
    <property type="project" value="InterPro"/>
</dbReference>
<dbReference type="GO" id="GO:0140664">
    <property type="term" value="F:ATP-dependent DNA damage sensor activity"/>
    <property type="evidence" value="ECO:0007669"/>
    <property type="project" value="InterPro"/>
</dbReference>
<dbReference type="GO" id="GO:0030983">
    <property type="term" value="F:mismatched DNA binding"/>
    <property type="evidence" value="ECO:0007669"/>
    <property type="project" value="InterPro"/>
</dbReference>
<dbReference type="GO" id="GO:0006298">
    <property type="term" value="P:mismatch repair"/>
    <property type="evidence" value="ECO:0007669"/>
    <property type="project" value="UniProtKB-UniRule"/>
</dbReference>
<dbReference type="CDD" id="cd16926">
    <property type="entry name" value="HATPase_MutL-MLH-PMS-like"/>
    <property type="match status" value="1"/>
</dbReference>
<dbReference type="CDD" id="cd00782">
    <property type="entry name" value="MutL_Trans"/>
    <property type="match status" value="1"/>
</dbReference>
<dbReference type="FunFam" id="3.30.1370.100:FF:000004">
    <property type="entry name" value="DNA mismatch repair endonuclease MutL"/>
    <property type="match status" value="1"/>
</dbReference>
<dbReference type="FunFam" id="3.30.565.10:FF:000003">
    <property type="entry name" value="DNA mismatch repair endonuclease MutL"/>
    <property type="match status" value="1"/>
</dbReference>
<dbReference type="Gene3D" id="3.30.230.10">
    <property type="match status" value="1"/>
</dbReference>
<dbReference type="Gene3D" id="3.30.565.10">
    <property type="entry name" value="Histidine kinase-like ATPase, C-terminal domain"/>
    <property type="match status" value="1"/>
</dbReference>
<dbReference type="Gene3D" id="3.30.1540.20">
    <property type="entry name" value="MutL, C-terminal domain, dimerisation subdomain"/>
    <property type="match status" value="1"/>
</dbReference>
<dbReference type="Gene3D" id="3.30.1370.100">
    <property type="entry name" value="MutL, C-terminal domain, regulatory subdomain"/>
    <property type="match status" value="1"/>
</dbReference>
<dbReference type="HAMAP" id="MF_00149">
    <property type="entry name" value="DNA_mis_repair"/>
    <property type="match status" value="1"/>
</dbReference>
<dbReference type="InterPro" id="IPR014762">
    <property type="entry name" value="DNA_mismatch_repair_CS"/>
</dbReference>
<dbReference type="InterPro" id="IPR020667">
    <property type="entry name" value="DNA_mismatch_repair_MutL"/>
</dbReference>
<dbReference type="InterPro" id="IPR013507">
    <property type="entry name" value="DNA_mismatch_S5_2-like"/>
</dbReference>
<dbReference type="InterPro" id="IPR036890">
    <property type="entry name" value="HATPase_C_sf"/>
</dbReference>
<dbReference type="InterPro" id="IPR002099">
    <property type="entry name" value="MutL/Mlh/PMS"/>
</dbReference>
<dbReference type="InterPro" id="IPR038973">
    <property type="entry name" value="MutL/Mlh/Pms-like"/>
</dbReference>
<dbReference type="InterPro" id="IPR014790">
    <property type="entry name" value="MutL_C"/>
</dbReference>
<dbReference type="InterPro" id="IPR042120">
    <property type="entry name" value="MutL_C_dimsub"/>
</dbReference>
<dbReference type="InterPro" id="IPR042121">
    <property type="entry name" value="MutL_C_regsub"/>
</dbReference>
<dbReference type="InterPro" id="IPR037198">
    <property type="entry name" value="MutL_C_sf"/>
</dbReference>
<dbReference type="InterPro" id="IPR020568">
    <property type="entry name" value="Ribosomal_Su5_D2-typ_SF"/>
</dbReference>
<dbReference type="InterPro" id="IPR014721">
    <property type="entry name" value="Ribsml_uS5_D2-typ_fold_subgr"/>
</dbReference>
<dbReference type="NCBIfam" id="TIGR00585">
    <property type="entry name" value="mutl"/>
    <property type="match status" value="1"/>
</dbReference>
<dbReference type="NCBIfam" id="NF000950">
    <property type="entry name" value="PRK00095.1-3"/>
    <property type="match status" value="1"/>
</dbReference>
<dbReference type="PANTHER" id="PTHR10073">
    <property type="entry name" value="DNA MISMATCH REPAIR PROTEIN MLH, PMS, MUTL"/>
    <property type="match status" value="1"/>
</dbReference>
<dbReference type="PANTHER" id="PTHR10073:SF12">
    <property type="entry name" value="DNA MISMATCH REPAIR PROTEIN MLH1"/>
    <property type="match status" value="1"/>
</dbReference>
<dbReference type="Pfam" id="PF01119">
    <property type="entry name" value="DNA_mis_repair"/>
    <property type="match status" value="1"/>
</dbReference>
<dbReference type="Pfam" id="PF13589">
    <property type="entry name" value="HATPase_c_3"/>
    <property type="match status" value="1"/>
</dbReference>
<dbReference type="Pfam" id="PF08676">
    <property type="entry name" value="MutL_C"/>
    <property type="match status" value="1"/>
</dbReference>
<dbReference type="SMART" id="SM01340">
    <property type="entry name" value="DNA_mis_repair"/>
    <property type="match status" value="1"/>
</dbReference>
<dbReference type="SMART" id="SM00853">
    <property type="entry name" value="MutL_C"/>
    <property type="match status" value="1"/>
</dbReference>
<dbReference type="SUPFAM" id="SSF55874">
    <property type="entry name" value="ATPase domain of HSP90 chaperone/DNA topoisomerase II/histidine kinase"/>
    <property type="match status" value="1"/>
</dbReference>
<dbReference type="SUPFAM" id="SSF118116">
    <property type="entry name" value="DNA mismatch repair protein MutL"/>
    <property type="match status" value="1"/>
</dbReference>
<dbReference type="SUPFAM" id="SSF54211">
    <property type="entry name" value="Ribosomal protein S5 domain 2-like"/>
    <property type="match status" value="1"/>
</dbReference>
<dbReference type="PROSITE" id="PS00058">
    <property type="entry name" value="DNA_MISMATCH_REPAIR_1"/>
    <property type="match status" value="1"/>
</dbReference>
<accession>Q5X9H5</accession>
<proteinExistence type="inferred from homology"/>
<gene>
    <name evidence="1" type="primary">mutL</name>
    <name type="ordered locus">M6_Spy1803</name>
</gene>
<protein>
    <recommendedName>
        <fullName evidence="1">DNA mismatch repair protein MutL</fullName>
    </recommendedName>
</protein>